<dbReference type="EMBL" id="CP001095">
    <property type="protein sequence ID" value="ACJ53289.1"/>
    <property type="molecule type" value="Genomic_DNA"/>
</dbReference>
<dbReference type="EMBL" id="AP010889">
    <property type="protein sequence ID" value="BAJ69880.1"/>
    <property type="molecule type" value="Genomic_DNA"/>
</dbReference>
<dbReference type="RefSeq" id="WP_012578470.1">
    <property type="nucleotide sequence ID" value="NZ_JDTT01000039.1"/>
</dbReference>
<dbReference type="SMR" id="B7GND3"/>
<dbReference type="KEGG" id="bln:Blon_2230"/>
<dbReference type="KEGG" id="blon:BLIJ_2303"/>
<dbReference type="PATRIC" id="fig|391904.8.peg.2305"/>
<dbReference type="HOGENOM" id="CLU_078858_2_1_11"/>
<dbReference type="Proteomes" id="UP000001360">
    <property type="component" value="Chromosome"/>
</dbReference>
<dbReference type="GO" id="GO:0022625">
    <property type="term" value="C:cytosolic large ribosomal subunit"/>
    <property type="evidence" value="ECO:0007669"/>
    <property type="project" value="TreeGrafter"/>
</dbReference>
<dbReference type="GO" id="GO:0019843">
    <property type="term" value="F:rRNA binding"/>
    <property type="evidence" value="ECO:0007669"/>
    <property type="project" value="UniProtKB-UniRule"/>
</dbReference>
<dbReference type="GO" id="GO:0003735">
    <property type="term" value="F:structural constituent of ribosome"/>
    <property type="evidence" value="ECO:0007669"/>
    <property type="project" value="InterPro"/>
</dbReference>
<dbReference type="GO" id="GO:0000049">
    <property type="term" value="F:tRNA binding"/>
    <property type="evidence" value="ECO:0007669"/>
    <property type="project" value="UniProtKB-KW"/>
</dbReference>
<dbReference type="GO" id="GO:0006412">
    <property type="term" value="P:translation"/>
    <property type="evidence" value="ECO:0007669"/>
    <property type="project" value="UniProtKB-UniRule"/>
</dbReference>
<dbReference type="CDD" id="cd01433">
    <property type="entry name" value="Ribosomal_L16_L10e"/>
    <property type="match status" value="1"/>
</dbReference>
<dbReference type="FunFam" id="3.90.1170.10:FF:000001">
    <property type="entry name" value="50S ribosomal protein L16"/>
    <property type="match status" value="1"/>
</dbReference>
<dbReference type="Gene3D" id="3.90.1170.10">
    <property type="entry name" value="Ribosomal protein L10e/L16"/>
    <property type="match status" value="1"/>
</dbReference>
<dbReference type="HAMAP" id="MF_01342">
    <property type="entry name" value="Ribosomal_uL16"/>
    <property type="match status" value="1"/>
</dbReference>
<dbReference type="InterPro" id="IPR047873">
    <property type="entry name" value="Ribosomal_uL16"/>
</dbReference>
<dbReference type="InterPro" id="IPR000114">
    <property type="entry name" value="Ribosomal_uL16_bact-type"/>
</dbReference>
<dbReference type="InterPro" id="IPR020798">
    <property type="entry name" value="Ribosomal_uL16_CS"/>
</dbReference>
<dbReference type="InterPro" id="IPR016180">
    <property type="entry name" value="Ribosomal_uL16_dom"/>
</dbReference>
<dbReference type="InterPro" id="IPR036920">
    <property type="entry name" value="Ribosomal_uL16_sf"/>
</dbReference>
<dbReference type="NCBIfam" id="TIGR01164">
    <property type="entry name" value="rplP_bact"/>
    <property type="match status" value="1"/>
</dbReference>
<dbReference type="PANTHER" id="PTHR12220">
    <property type="entry name" value="50S/60S RIBOSOMAL PROTEIN L16"/>
    <property type="match status" value="1"/>
</dbReference>
<dbReference type="PANTHER" id="PTHR12220:SF13">
    <property type="entry name" value="LARGE RIBOSOMAL SUBUNIT PROTEIN UL16M"/>
    <property type="match status" value="1"/>
</dbReference>
<dbReference type="Pfam" id="PF00252">
    <property type="entry name" value="Ribosomal_L16"/>
    <property type="match status" value="1"/>
</dbReference>
<dbReference type="PRINTS" id="PR00060">
    <property type="entry name" value="RIBOSOMALL16"/>
</dbReference>
<dbReference type="SUPFAM" id="SSF54686">
    <property type="entry name" value="Ribosomal protein L16p/L10e"/>
    <property type="match status" value="1"/>
</dbReference>
<dbReference type="PROSITE" id="PS00701">
    <property type="entry name" value="RIBOSOMAL_L16_2"/>
    <property type="match status" value="1"/>
</dbReference>
<protein>
    <recommendedName>
        <fullName evidence="1">Large ribosomal subunit protein uL16</fullName>
    </recommendedName>
    <alternativeName>
        <fullName evidence="3">50S ribosomal protein L16</fullName>
    </alternativeName>
</protein>
<accession>B7GND3</accession>
<accession>E8MN77</accession>
<gene>
    <name evidence="1" type="primary">rplP</name>
    <name type="ordered locus">Blon_2230</name>
    <name type="ordered locus">BLIJ_2303</name>
</gene>
<organism>
    <name type="scientific">Bifidobacterium longum subsp. infantis (strain ATCC 15697 / DSM 20088 / JCM 1222 / NCTC 11817 / S12)</name>
    <dbReference type="NCBI Taxonomy" id="391904"/>
    <lineage>
        <taxon>Bacteria</taxon>
        <taxon>Bacillati</taxon>
        <taxon>Actinomycetota</taxon>
        <taxon>Actinomycetes</taxon>
        <taxon>Bifidobacteriales</taxon>
        <taxon>Bifidobacteriaceae</taxon>
        <taxon>Bifidobacterium</taxon>
    </lineage>
</organism>
<evidence type="ECO:0000255" key="1">
    <source>
        <dbReference type="HAMAP-Rule" id="MF_01342"/>
    </source>
</evidence>
<evidence type="ECO:0000256" key="2">
    <source>
        <dbReference type="SAM" id="MobiDB-lite"/>
    </source>
</evidence>
<evidence type="ECO:0000305" key="3"/>
<keyword id="KW-0687">Ribonucleoprotein</keyword>
<keyword id="KW-0689">Ribosomal protein</keyword>
<keyword id="KW-0694">RNA-binding</keyword>
<keyword id="KW-0699">rRNA-binding</keyword>
<keyword id="KW-0820">tRNA-binding</keyword>
<sequence length="139" mass="15575">MLIPKRTKYRKQHRPVRSGMSKGGNEINFGDFGIQSLAPAYVTNRQIEAARIAMTRYIKRGGRVWITIFPDRPLTKHPLGARMGSGKGAPEFWIANVRPGRVMFEIGGVSEDVAKEALRRAIDKLPMKCRIIAREGGDI</sequence>
<proteinExistence type="inferred from homology"/>
<name>RL16_BIFLS</name>
<feature type="chain" id="PRO_1000166338" description="Large ribosomal subunit protein uL16">
    <location>
        <begin position="1"/>
        <end position="139"/>
    </location>
</feature>
<feature type="region of interest" description="Disordered" evidence="2">
    <location>
        <begin position="1"/>
        <end position="22"/>
    </location>
</feature>
<feature type="compositionally biased region" description="Basic residues" evidence="2">
    <location>
        <begin position="1"/>
        <end position="16"/>
    </location>
</feature>
<reference key="1">
    <citation type="journal article" date="2008" name="Proc. Natl. Acad. Sci. U.S.A.">
        <title>The genome sequence of Bifidobacterium longum subsp. infantis reveals adaptations for milk utilization within the infant microbiome.</title>
        <authorList>
            <person name="Sela D.A."/>
            <person name="Chapman J."/>
            <person name="Adeuya A."/>
            <person name="Kim J.H."/>
            <person name="Chen F."/>
            <person name="Whitehead T.R."/>
            <person name="Lapidus A."/>
            <person name="Rokhsar D.S."/>
            <person name="Lebrilla C.B."/>
            <person name="German J.B."/>
            <person name="Price N.P."/>
            <person name="Richardson P.M."/>
            <person name="Mills D.A."/>
        </authorList>
    </citation>
    <scope>NUCLEOTIDE SEQUENCE [LARGE SCALE GENOMIC DNA]</scope>
    <source>
        <strain>ATCC 15697 / DSM 20088 / JCM 1222 / NCTC 11817 / S12</strain>
    </source>
</reference>
<reference key="2">
    <citation type="journal article" date="2011" name="Nature">
        <title>Bifidobacteria can protect from enteropathogenic infection through production of acetate.</title>
        <authorList>
            <person name="Fukuda S."/>
            <person name="Toh H."/>
            <person name="Hase K."/>
            <person name="Oshima K."/>
            <person name="Nakanishi Y."/>
            <person name="Yoshimura K."/>
            <person name="Tobe T."/>
            <person name="Clarke J.M."/>
            <person name="Topping D.L."/>
            <person name="Suzuki T."/>
            <person name="Taylor T.D."/>
            <person name="Itoh K."/>
            <person name="Kikuchi J."/>
            <person name="Morita H."/>
            <person name="Hattori M."/>
            <person name="Ohno H."/>
        </authorList>
    </citation>
    <scope>NUCLEOTIDE SEQUENCE [LARGE SCALE GENOMIC DNA]</scope>
    <source>
        <strain>ATCC 15697 / DSM 20088 / JCM 1222 / NCTC 11817 / S12</strain>
    </source>
</reference>
<comment type="function">
    <text evidence="1">Binds 23S rRNA and is also seen to make contacts with the A and possibly P site tRNAs.</text>
</comment>
<comment type="subunit">
    <text evidence="1">Part of the 50S ribosomal subunit.</text>
</comment>
<comment type="similarity">
    <text evidence="1">Belongs to the universal ribosomal protein uL16 family.</text>
</comment>